<sequence length="202" mass="23398">MSHSISMHDDDLEKLGESLNEIIMSSKAESVLQAARKKKQEFFDHYIKTKKTLTELLNDLVHTEEVVGQKLLDLDQQKSQMMQEIMKMEQEVQRSQSKSQNLDSELEFLQKELERLRDAEQEIQTLQQEVDEDTTEVIPSAIYVAQLYSKVTKIKLEFDTEPHILKGVHYGADVVTPINIDTSTRTPCEVSDELWSLVKTEW</sequence>
<keyword id="KW-0131">Cell cycle</keyword>
<keyword id="KW-0132">Cell division</keyword>
<keyword id="KW-0137">Centromere</keyword>
<keyword id="KW-0158">Chromosome</keyword>
<keyword id="KW-0175">Coiled coil</keyword>
<keyword id="KW-0995">Kinetochore</keyword>
<keyword id="KW-0498">Mitosis</keyword>
<keyword id="KW-0539">Nucleus</keyword>
<keyword id="KW-1185">Reference proteome</keyword>
<dbReference type="EMBL" id="BC076486">
    <property type="protein sequence ID" value="AAH76486.1"/>
    <property type="status" value="ALT_INIT"/>
    <property type="molecule type" value="mRNA"/>
</dbReference>
<dbReference type="EMBL" id="BC095251">
    <property type="protein sequence ID" value="AAH95251.1"/>
    <property type="molecule type" value="mRNA"/>
</dbReference>
<dbReference type="RefSeq" id="NP_001019611.1">
    <property type="nucleotide sequence ID" value="NM_001024440.1"/>
</dbReference>
<dbReference type="RefSeq" id="XP_017209818.1">
    <property type="nucleotide sequence ID" value="XM_017354329.1"/>
</dbReference>
<dbReference type="SMR" id="Q503N2"/>
<dbReference type="FunCoup" id="Q503N2">
    <property type="interactions" value="543"/>
</dbReference>
<dbReference type="STRING" id="7955.ENSDARP00000059307"/>
<dbReference type="PaxDb" id="7955-ENSDARP00000059307"/>
<dbReference type="Ensembl" id="ENSDART00000059308">
    <property type="protein sequence ID" value="ENSDARP00000059307"/>
    <property type="gene ID" value="ENSDARG00000093622"/>
</dbReference>
<dbReference type="GeneID" id="554147"/>
<dbReference type="KEGG" id="dre:554147"/>
<dbReference type="AGR" id="ZFIN:ZDB-GENE-050522-456"/>
<dbReference type="CTD" id="147841"/>
<dbReference type="ZFIN" id="ZDB-GENE-050522-456">
    <property type="gene designation" value="spc24"/>
</dbReference>
<dbReference type="eggNOG" id="ENOG502S26V">
    <property type="taxonomic scope" value="Eukaryota"/>
</dbReference>
<dbReference type="HOGENOM" id="CLU_119584_0_0_1"/>
<dbReference type="InParanoid" id="Q503N2"/>
<dbReference type="OMA" id="DQLWDFV"/>
<dbReference type="OrthoDB" id="6432863at2759"/>
<dbReference type="PhylomeDB" id="Q503N2"/>
<dbReference type="TreeFam" id="TF333217"/>
<dbReference type="PRO" id="PR:Q503N2"/>
<dbReference type="Proteomes" id="UP000000437">
    <property type="component" value="Chromosome 3"/>
</dbReference>
<dbReference type="Bgee" id="ENSDARG00000093622">
    <property type="expression patterns" value="Expressed in early embryo and 28 other cell types or tissues"/>
</dbReference>
<dbReference type="ExpressionAtlas" id="Q503N2">
    <property type="expression patterns" value="baseline"/>
</dbReference>
<dbReference type="GO" id="GO:0031262">
    <property type="term" value="C:Ndc80 complex"/>
    <property type="evidence" value="ECO:0000250"/>
    <property type="project" value="UniProtKB"/>
</dbReference>
<dbReference type="GO" id="GO:0005634">
    <property type="term" value="C:nucleus"/>
    <property type="evidence" value="ECO:0007669"/>
    <property type="project" value="UniProtKB-SubCell"/>
</dbReference>
<dbReference type="GO" id="GO:0051301">
    <property type="term" value="P:cell division"/>
    <property type="evidence" value="ECO:0007669"/>
    <property type="project" value="UniProtKB-KW"/>
</dbReference>
<dbReference type="GO" id="GO:0007059">
    <property type="term" value="P:chromosome segregation"/>
    <property type="evidence" value="ECO:0000318"/>
    <property type="project" value="GO_Central"/>
</dbReference>
<dbReference type="CDD" id="cd11565">
    <property type="entry name" value="RWD_Spc24"/>
    <property type="match status" value="1"/>
</dbReference>
<dbReference type="Gene3D" id="3.30.160.570">
    <property type="entry name" value="Ncd80 complex, Spc24 subunit"/>
    <property type="match status" value="1"/>
</dbReference>
<dbReference type="InterPro" id="IPR013252">
    <property type="entry name" value="Ndc80_Spc24"/>
</dbReference>
<dbReference type="PANTHER" id="PTHR22142">
    <property type="match status" value="1"/>
</dbReference>
<dbReference type="PANTHER" id="PTHR22142:SF2">
    <property type="entry name" value="KINETOCHORE PROTEIN SPC24"/>
    <property type="match status" value="1"/>
</dbReference>
<dbReference type="Pfam" id="PF08286">
    <property type="entry name" value="Spc24"/>
    <property type="match status" value="1"/>
</dbReference>
<gene>
    <name type="primary">spc24</name>
    <name type="synonym">spbc24</name>
    <name type="ORF">zgc:110417</name>
</gene>
<feature type="chain" id="PRO_0000249561" description="Kinetochore protein Spc24">
    <location>
        <begin position="1"/>
        <end position="202"/>
    </location>
</feature>
<feature type="coiled-coil region" evidence="3">
    <location>
        <begin position="69"/>
        <end position="138"/>
    </location>
</feature>
<feature type="sequence conflict" description="In Ref. 1; AAH95251." evidence="4" ref="1">
    <original>E</original>
    <variation>G</variation>
    <location>
        <position position="65"/>
    </location>
</feature>
<proteinExistence type="evidence at transcript level"/>
<protein>
    <recommendedName>
        <fullName>Kinetochore protein Spc24</fullName>
    </recommendedName>
</protein>
<reference key="1">
    <citation type="submission" date="2005-05" db="EMBL/GenBank/DDBJ databases">
        <authorList>
            <consortium name="NIH - Zebrafish Gene Collection (ZGC) project"/>
        </authorList>
    </citation>
    <scope>NUCLEOTIDE SEQUENCE [LARGE SCALE MRNA]</scope>
    <source>
        <tissue>Embryo</tissue>
    </source>
</reference>
<evidence type="ECO:0000250" key="1"/>
<evidence type="ECO:0000250" key="2">
    <source>
        <dbReference type="UniProtKB" id="Q8NBT2"/>
    </source>
</evidence>
<evidence type="ECO:0000255" key="3"/>
<evidence type="ECO:0000305" key="4"/>
<comment type="function">
    <text evidence="2">Acts as a component of the essential kinetochore-associated NDC80 complex, which is required for chromosome segregation and spindle checkpoint activity. Required for kinetochore integrity and the organization of stable microtubule binding sites in the outer plate of the kinetochore. The NDC80 complex synergistically enhances the affinity of the SKA1 complex for microtubules and may allow the NDC80 complex to track depolymerizing microtubules.</text>
</comment>
<comment type="subunit">
    <text evidence="1">Component of the NDC80 complex, which is composed of ndc80, cdca1, spbc24 and spbc25.</text>
</comment>
<comment type="subcellular location">
    <subcellularLocation>
        <location evidence="2">Nucleus</location>
    </subcellularLocation>
    <subcellularLocation>
        <location evidence="2">Chromosome</location>
        <location evidence="2">Centromere</location>
        <location evidence="2">Kinetochore</location>
    </subcellularLocation>
    <text evidence="2">Localizes to kinetochores from late prophase to anaphase. Localizes specifically to the outer plate of the kinetochore.</text>
</comment>
<comment type="similarity">
    <text evidence="4">Belongs to the SPC24 family.</text>
</comment>
<comment type="sequence caution" evidence="4">
    <conflict type="erroneous initiation">
        <sequence resource="EMBL-CDS" id="AAH76486"/>
    </conflict>
</comment>
<accession>Q503N2</accession>
<accession>Q6DG65</accession>
<name>SPC24_DANRE</name>
<organism>
    <name type="scientific">Danio rerio</name>
    <name type="common">Zebrafish</name>
    <name type="synonym">Brachydanio rerio</name>
    <dbReference type="NCBI Taxonomy" id="7955"/>
    <lineage>
        <taxon>Eukaryota</taxon>
        <taxon>Metazoa</taxon>
        <taxon>Chordata</taxon>
        <taxon>Craniata</taxon>
        <taxon>Vertebrata</taxon>
        <taxon>Euteleostomi</taxon>
        <taxon>Actinopterygii</taxon>
        <taxon>Neopterygii</taxon>
        <taxon>Teleostei</taxon>
        <taxon>Ostariophysi</taxon>
        <taxon>Cypriniformes</taxon>
        <taxon>Danionidae</taxon>
        <taxon>Danioninae</taxon>
        <taxon>Danio</taxon>
    </lineage>
</organism>